<keyword id="KW-0051">Antiviral defense</keyword>
<keyword id="KW-0202">Cytokine</keyword>
<keyword id="KW-1015">Disulfide bond</keyword>
<keyword id="KW-1267">Proteomics identification</keyword>
<keyword id="KW-1185">Reference proteome</keyword>
<keyword id="KW-0964">Secreted</keyword>
<keyword id="KW-0732">Signal</keyword>
<accession>P05015</accession>
<accession>Q5VV12</accession>
<comment type="function">
    <text>Produced by macrophages, IFN-alpha have antiviral activities. Interferon stimulates the production of two enzymes: a protein kinase and an oligoadenylate synthetase.</text>
</comment>
<comment type="interaction">
    <interactant intactId="EBI-7055360">
        <id>P05015</id>
    </interactant>
    <interactant intactId="EBI-740220">
        <id>O14964</id>
        <label>HGS</label>
    </interactant>
    <organismsDiffer>false</organismsDiffer>
    <experiments>3</experiments>
</comment>
<comment type="subcellular location">
    <subcellularLocation>
        <location>Secreted</location>
    </subcellularLocation>
</comment>
<comment type="similarity">
    <text evidence="2">Belongs to the alpha/beta interferon family.</text>
</comment>
<sequence>MALSFSLLMAVLVLSYKSICSLGCDLPQTHSLGNRRALILLAQMGRISHFSCLKDRYDFGFPQEVFDGNQFQKAQAISAFHEMIQQTFNLFSTKDSSAAWDETLLDKFYIELFQQLNDLEACVTQEVGVEEIALMNEDSILAVRKYFQRITLYLMGKKYSPCAWEVVRAEIMRSFSFSTNLQKGLRRKD</sequence>
<organism>
    <name type="scientific">Homo sapiens</name>
    <name type="common">Human</name>
    <dbReference type="NCBI Taxonomy" id="9606"/>
    <lineage>
        <taxon>Eukaryota</taxon>
        <taxon>Metazoa</taxon>
        <taxon>Chordata</taxon>
        <taxon>Craniata</taxon>
        <taxon>Vertebrata</taxon>
        <taxon>Euteleostomi</taxon>
        <taxon>Mammalia</taxon>
        <taxon>Eutheria</taxon>
        <taxon>Euarchontoglires</taxon>
        <taxon>Primates</taxon>
        <taxon>Haplorrhini</taxon>
        <taxon>Catarrhini</taxon>
        <taxon>Hominidae</taxon>
        <taxon>Homo</taxon>
    </lineage>
</organism>
<feature type="signal peptide">
    <location>
        <begin position="1"/>
        <end position="23"/>
    </location>
</feature>
<feature type="chain" id="PRO_0000016368" description="Interferon alpha-16">
    <location>
        <begin position="24"/>
        <end position="189"/>
    </location>
</feature>
<feature type="disulfide bond" evidence="1">
    <location>
        <begin position="24"/>
        <end position="122"/>
    </location>
</feature>
<feature type="disulfide bond" evidence="1">
    <location>
        <begin position="52"/>
        <end position="162"/>
    </location>
</feature>
<reference key="1">
    <citation type="journal article" date="1985" name="J. Mol. Biol.">
        <title>Structural relationship of human interferon alpha genes and pseudogenes.</title>
        <authorList>
            <person name="Henco K."/>
            <person name="Brosius J."/>
            <person name="Fujisawa A."/>
            <person name="Fujisawa J."/>
            <person name="Haynes J.R."/>
            <person name="Hochstadt J."/>
            <person name="Kovacic T."/>
            <person name="Pasek M."/>
            <person name="Schamboeck A."/>
            <person name="Schmid J."/>
            <person name="Todokoro K."/>
            <person name="Waelchli M."/>
            <person name="Nagata S."/>
            <person name="Weissmann C."/>
        </authorList>
    </citation>
    <scope>NUCLEOTIDE SEQUENCE [GENOMIC DNA]</scope>
</reference>
<reference key="2">
    <citation type="journal article" date="1984" name="Proc. Natl. Acad. Sci. U.S.A.">
        <title>Human genomic library screened with 17-base oligonucleotide probes yields a novel interferon gene.</title>
        <authorList>
            <person name="Torczynski R.M."/>
            <person name="Fuke M."/>
            <person name="Bollon A.P."/>
        </authorList>
    </citation>
    <scope>NUCLEOTIDE SEQUENCE [GENOMIC DNA]</scope>
</reference>
<reference key="3">
    <citation type="journal article" date="1984" name="J. Interferon Res.">
        <title>Novel human leukocyte interferon subtype and structural comparison of alpha interferon genes.</title>
        <authorList>
            <person name="Gren E."/>
            <person name="Berzin V.M."/>
            <person name="Jansone I."/>
            <person name="Tsimanis A."/>
            <person name="Vishnevsky Y."/>
            <person name="Apsalons U."/>
        </authorList>
    </citation>
    <scope>NUCLEOTIDE SEQUENCE [MRNA]</scope>
</reference>
<reference key="4">
    <citation type="journal article" date="2004" name="Nature">
        <title>DNA sequence and analysis of human chromosome 9.</title>
        <authorList>
            <person name="Humphray S.J."/>
            <person name="Oliver K."/>
            <person name="Hunt A.R."/>
            <person name="Plumb R.W."/>
            <person name="Loveland J.E."/>
            <person name="Howe K.L."/>
            <person name="Andrews T.D."/>
            <person name="Searle S."/>
            <person name="Hunt S.E."/>
            <person name="Scott C.E."/>
            <person name="Jones M.C."/>
            <person name="Ainscough R."/>
            <person name="Almeida J.P."/>
            <person name="Ambrose K.D."/>
            <person name="Ashwell R.I.S."/>
            <person name="Babbage A.K."/>
            <person name="Babbage S."/>
            <person name="Bagguley C.L."/>
            <person name="Bailey J."/>
            <person name="Banerjee R."/>
            <person name="Barker D.J."/>
            <person name="Barlow K.F."/>
            <person name="Bates K."/>
            <person name="Beasley H."/>
            <person name="Beasley O."/>
            <person name="Bird C.P."/>
            <person name="Bray-Allen S."/>
            <person name="Brown A.J."/>
            <person name="Brown J.Y."/>
            <person name="Burford D."/>
            <person name="Burrill W."/>
            <person name="Burton J."/>
            <person name="Carder C."/>
            <person name="Carter N.P."/>
            <person name="Chapman J.C."/>
            <person name="Chen Y."/>
            <person name="Clarke G."/>
            <person name="Clark S.Y."/>
            <person name="Clee C.M."/>
            <person name="Clegg S."/>
            <person name="Collier R.E."/>
            <person name="Corby N."/>
            <person name="Crosier M."/>
            <person name="Cummings A.T."/>
            <person name="Davies J."/>
            <person name="Dhami P."/>
            <person name="Dunn M."/>
            <person name="Dutta I."/>
            <person name="Dyer L.W."/>
            <person name="Earthrowl M.E."/>
            <person name="Faulkner L."/>
            <person name="Fleming C.J."/>
            <person name="Frankish A."/>
            <person name="Frankland J.A."/>
            <person name="French L."/>
            <person name="Fricker D.G."/>
            <person name="Garner P."/>
            <person name="Garnett J."/>
            <person name="Ghori J."/>
            <person name="Gilbert J.G.R."/>
            <person name="Glison C."/>
            <person name="Grafham D.V."/>
            <person name="Gribble S."/>
            <person name="Griffiths C."/>
            <person name="Griffiths-Jones S."/>
            <person name="Grocock R."/>
            <person name="Guy J."/>
            <person name="Hall R.E."/>
            <person name="Hammond S."/>
            <person name="Harley J.L."/>
            <person name="Harrison E.S.I."/>
            <person name="Hart E.A."/>
            <person name="Heath P.D."/>
            <person name="Henderson C.D."/>
            <person name="Hopkins B.L."/>
            <person name="Howard P.J."/>
            <person name="Howden P.J."/>
            <person name="Huckle E."/>
            <person name="Johnson C."/>
            <person name="Johnson D."/>
            <person name="Joy A.A."/>
            <person name="Kay M."/>
            <person name="Keenan S."/>
            <person name="Kershaw J.K."/>
            <person name="Kimberley A.M."/>
            <person name="King A."/>
            <person name="Knights A."/>
            <person name="Laird G.K."/>
            <person name="Langford C."/>
            <person name="Lawlor S."/>
            <person name="Leongamornlert D.A."/>
            <person name="Leversha M."/>
            <person name="Lloyd C."/>
            <person name="Lloyd D.M."/>
            <person name="Lovell J."/>
            <person name="Martin S."/>
            <person name="Mashreghi-Mohammadi M."/>
            <person name="Matthews L."/>
            <person name="McLaren S."/>
            <person name="McLay K.E."/>
            <person name="McMurray A."/>
            <person name="Milne S."/>
            <person name="Nickerson T."/>
            <person name="Nisbett J."/>
            <person name="Nordsiek G."/>
            <person name="Pearce A.V."/>
            <person name="Peck A.I."/>
            <person name="Porter K.M."/>
            <person name="Pandian R."/>
            <person name="Pelan S."/>
            <person name="Phillimore B."/>
            <person name="Povey S."/>
            <person name="Ramsey Y."/>
            <person name="Rand V."/>
            <person name="Scharfe M."/>
            <person name="Sehra H.K."/>
            <person name="Shownkeen R."/>
            <person name="Sims S.K."/>
            <person name="Skuce C.D."/>
            <person name="Smith M."/>
            <person name="Steward C.A."/>
            <person name="Swarbreck D."/>
            <person name="Sycamore N."/>
            <person name="Tester J."/>
            <person name="Thorpe A."/>
            <person name="Tracey A."/>
            <person name="Tromans A."/>
            <person name="Thomas D.W."/>
            <person name="Wall M."/>
            <person name="Wallis J.M."/>
            <person name="West A.P."/>
            <person name="Whitehead S.L."/>
            <person name="Willey D.L."/>
            <person name="Williams S.A."/>
            <person name="Wilming L."/>
            <person name="Wray P.W."/>
            <person name="Young L."/>
            <person name="Ashurst J.L."/>
            <person name="Coulson A."/>
            <person name="Blocker H."/>
            <person name="Durbin R.M."/>
            <person name="Sulston J.E."/>
            <person name="Hubbard T."/>
            <person name="Jackson M.J."/>
            <person name="Bentley D.R."/>
            <person name="Beck S."/>
            <person name="Rogers J."/>
            <person name="Dunham I."/>
        </authorList>
    </citation>
    <scope>NUCLEOTIDE SEQUENCE [LARGE SCALE GENOMIC DNA]</scope>
</reference>
<reference key="5">
    <citation type="submission" date="2005-09" db="EMBL/GenBank/DDBJ databases">
        <authorList>
            <person name="Mural R.J."/>
            <person name="Istrail S."/>
            <person name="Sutton G.G."/>
            <person name="Florea L."/>
            <person name="Halpern A.L."/>
            <person name="Mobarry C.M."/>
            <person name="Lippert R."/>
            <person name="Walenz B."/>
            <person name="Shatkay H."/>
            <person name="Dew I."/>
            <person name="Miller J.R."/>
            <person name="Flanigan M.J."/>
            <person name="Edwards N.J."/>
            <person name="Bolanos R."/>
            <person name="Fasulo D."/>
            <person name="Halldorsson B.V."/>
            <person name="Hannenhalli S."/>
            <person name="Turner R."/>
            <person name="Yooseph S."/>
            <person name="Lu F."/>
            <person name="Nusskern D.R."/>
            <person name="Shue B.C."/>
            <person name="Zheng X.H."/>
            <person name="Zhong F."/>
            <person name="Delcher A.L."/>
            <person name="Huson D.H."/>
            <person name="Kravitz S.A."/>
            <person name="Mouchard L."/>
            <person name="Reinert K."/>
            <person name="Remington K.A."/>
            <person name="Clark A.G."/>
            <person name="Waterman M.S."/>
            <person name="Eichler E.E."/>
            <person name="Adams M.D."/>
            <person name="Hunkapiller M.W."/>
            <person name="Myers E.W."/>
            <person name="Venter J.C."/>
        </authorList>
    </citation>
    <scope>NUCLEOTIDE SEQUENCE [LARGE SCALE GENOMIC DNA]</scope>
</reference>
<name>IFN16_HUMAN</name>
<gene>
    <name type="primary">IFNA16</name>
</gene>
<proteinExistence type="evidence at protein level"/>
<evidence type="ECO:0000250" key="1"/>
<evidence type="ECO:0000305" key="2"/>
<protein>
    <recommendedName>
        <fullName>Interferon alpha-16</fullName>
        <shortName>IFN-alpha-16</shortName>
    </recommendedName>
    <alternativeName>
        <fullName>Interferon alpha-WA</fullName>
    </alternativeName>
</protein>
<dbReference type="EMBL" id="X02957">
    <property type="protein sequence ID" value="CAA26703.1"/>
    <property type="molecule type" value="Genomic_DNA"/>
</dbReference>
<dbReference type="EMBL" id="K02055">
    <property type="protein sequence ID" value="AAA52727.1"/>
    <property type="molecule type" value="Genomic_DNA"/>
</dbReference>
<dbReference type="EMBL" id="M28585">
    <property type="protein sequence ID" value="AAA36042.1"/>
    <property type="molecule type" value="mRNA"/>
</dbReference>
<dbReference type="EMBL" id="AL512606">
    <property type="status" value="NOT_ANNOTATED_CDS"/>
    <property type="molecule type" value="Genomic_DNA"/>
</dbReference>
<dbReference type="EMBL" id="CH471071">
    <property type="protein sequence ID" value="EAW58618.1"/>
    <property type="molecule type" value="Genomic_DNA"/>
</dbReference>
<dbReference type="CCDS" id="CCDS34996.1"/>
<dbReference type="PIR" id="G23753">
    <property type="entry name" value="IVHU16"/>
</dbReference>
<dbReference type="RefSeq" id="NP_002164.1">
    <property type="nucleotide sequence ID" value="NM_002173.3"/>
</dbReference>
<dbReference type="SMR" id="P05015"/>
<dbReference type="BioGRID" id="109672">
    <property type="interactions" value="55"/>
</dbReference>
<dbReference type="ComplexPortal" id="CPX-6004">
    <property type="entry name" value="Interferon alpha receptor-ligand complex, IFNA16 variant"/>
</dbReference>
<dbReference type="FunCoup" id="P05015">
    <property type="interactions" value="937"/>
</dbReference>
<dbReference type="IntAct" id="P05015">
    <property type="interactions" value="6"/>
</dbReference>
<dbReference type="MINT" id="P05015"/>
<dbReference type="STRING" id="9606.ENSP00000369564"/>
<dbReference type="ChEMBL" id="CHEMBL3856161"/>
<dbReference type="iPTMnet" id="P05015"/>
<dbReference type="PhosphoSitePlus" id="P05015"/>
<dbReference type="BioMuta" id="IFNA16"/>
<dbReference type="DMDM" id="124463"/>
<dbReference type="MassIVE" id="P05015"/>
<dbReference type="PaxDb" id="9606-ENSP00000369564"/>
<dbReference type="PeptideAtlas" id="P05015"/>
<dbReference type="TopDownProteomics" id="P05015"/>
<dbReference type="ABCD" id="P05015">
    <property type="antibodies" value="2 sequenced antibodies"/>
</dbReference>
<dbReference type="Antibodypedia" id="24859">
    <property type="antibodies" value="98 antibodies from 19 providers"/>
</dbReference>
<dbReference type="DNASU" id="3449"/>
<dbReference type="Ensembl" id="ENST00000380216.1">
    <property type="protein sequence ID" value="ENSP00000369564.1"/>
    <property type="gene ID" value="ENSG00000147885.4"/>
</dbReference>
<dbReference type="GeneID" id="3449"/>
<dbReference type="KEGG" id="hsa:3449"/>
<dbReference type="MANE-Select" id="ENST00000380216.1">
    <property type="protein sequence ID" value="ENSP00000369564.1"/>
    <property type="RefSeq nucleotide sequence ID" value="NM_002173.3"/>
    <property type="RefSeq protein sequence ID" value="NP_002164.1"/>
</dbReference>
<dbReference type="UCSC" id="uc003zor.1">
    <property type="organism name" value="human"/>
</dbReference>
<dbReference type="AGR" id="HGNC:5421"/>
<dbReference type="CTD" id="3449"/>
<dbReference type="DisGeNET" id="3449"/>
<dbReference type="GeneCards" id="IFNA16"/>
<dbReference type="HGNC" id="HGNC:5421">
    <property type="gene designation" value="IFNA16"/>
</dbReference>
<dbReference type="HPA" id="ENSG00000147885">
    <property type="expression patterns" value="Not detected"/>
</dbReference>
<dbReference type="MIM" id="147580">
    <property type="type" value="gene"/>
</dbReference>
<dbReference type="neXtProt" id="NX_P05015"/>
<dbReference type="OpenTargets" id="ENSG00000147885"/>
<dbReference type="PharmGKB" id="PA29660"/>
<dbReference type="VEuPathDB" id="HostDB:ENSG00000147885"/>
<dbReference type="eggNOG" id="ENOG502SQAC">
    <property type="taxonomic scope" value="Eukaryota"/>
</dbReference>
<dbReference type="GeneTree" id="ENSGT01000000214430"/>
<dbReference type="HOGENOM" id="CLU_109427_0_0_1"/>
<dbReference type="InParanoid" id="P05015"/>
<dbReference type="OMA" id="ISAFHEM"/>
<dbReference type="OrthoDB" id="9824656at2759"/>
<dbReference type="PAN-GO" id="P05015">
    <property type="GO annotations" value="12 GO annotations based on evolutionary models"/>
</dbReference>
<dbReference type="PhylomeDB" id="P05015"/>
<dbReference type="TreeFam" id="TF336177"/>
<dbReference type="PathwayCommons" id="P05015"/>
<dbReference type="Reactome" id="R-HSA-909733">
    <property type="pathway name" value="Interferon alpha/beta signaling"/>
</dbReference>
<dbReference type="Reactome" id="R-HSA-912694">
    <property type="pathway name" value="Regulation of IFNA/IFNB signaling"/>
</dbReference>
<dbReference type="Reactome" id="R-HSA-933541">
    <property type="pathway name" value="TRAF6 mediated IRF7 activation"/>
</dbReference>
<dbReference type="Reactome" id="R-HSA-9705671">
    <property type="pathway name" value="SARS-CoV-2 activates/modulates innate and adaptive immune responses"/>
</dbReference>
<dbReference type="Reactome" id="R-HSA-983231">
    <property type="pathway name" value="Factors involved in megakaryocyte development and platelet production"/>
</dbReference>
<dbReference type="Reactome" id="R-HSA-9833109">
    <property type="pathway name" value="Evasion by RSV of host interferon responses"/>
</dbReference>
<dbReference type="SignaLink" id="P05015"/>
<dbReference type="BioGRID-ORCS" id="3449">
    <property type="hits" value="12 hits in 1049 CRISPR screens"/>
</dbReference>
<dbReference type="GeneWiki" id="IFNA16"/>
<dbReference type="GenomeRNAi" id="3449"/>
<dbReference type="Pharos" id="P05015">
    <property type="development level" value="Tbio"/>
</dbReference>
<dbReference type="PRO" id="PR:P05015"/>
<dbReference type="Proteomes" id="UP000005640">
    <property type="component" value="Chromosome 9"/>
</dbReference>
<dbReference type="RNAct" id="P05015">
    <property type="molecule type" value="protein"/>
</dbReference>
<dbReference type="Bgee" id="ENSG00000147885">
    <property type="expression patterns" value="Expressed in cell and 1 other cell type or tissue"/>
</dbReference>
<dbReference type="GO" id="GO:0005576">
    <property type="term" value="C:extracellular region"/>
    <property type="evidence" value="ECO:0000304"/>
    <property type="project" value="Reactome"/>
</dbReference>
<dbReference type="GO" id="GO:0005615">
    <property type="term" value="C:extracellular space"/>
    <property type="evidence" value="ECO:0000318"/>
    <property type="project" value="GO_Central"/>
</dbReference>
<dbReference type="GO" id="GO:0005125">
    <property type="term" value="F:cytokine activity"/>
    <property type="evidence" value="ECO:0000318"/>
    <property type="project" value="GO_Central"/>
</dbReference>
<dbReference type="GO" id="GO:0005132">
    <property type="term" value="F:type I interferon receptor binding"/>
    <property type="evidence" value="ECO:0000318"/>
    <property type="project" value="GO_Central"/>
</dbReference>
<dbReference type="GO" id="GO:0002250">
    <property type="term" value="P:adaptive immune response"/>
    <property type="evidence" value="ECO:0000318"/>
    <property type="project" value="GO_Central"/>
</dbReference>
<dbReference type="GO" id="GO:0002312">
    <property type="term" value="P:B cell activation involved in immune response"/>
    <property type="evidence" value="ECO:0000318"/>
    <property type="project" value="GO_Central"/>
</dbReference>
<dbReference type="GO" id="GO:0098586">
    <property type="term" value="P:cellular response to virus"/>
    <property type="evidence" value="ECO:0000303"/>
    <property type="project" value="ComplexPortal"/>
</dbReference>
<dbReference type="GO" id="GO:0051607">
    <property type="term" value="P:defense response to virus"/>
    <property type="evidence" value="ECO:0007669"/>
    <property type="project" value="UniProtKB-KW"/>
</dbReference>
<dbReference type="GO" id="GO:0006959">
    <property type="term" value="P:humoral immune response"/>
    <property type="evidence" value="ECO:0000318"/>
    <property type="project" value="GO_Central"/>
</dbReference>
<dbReference type="GO" id="GO:0002323">
    <property type="term" value="P:natural killer cell activation involved in immune response"/>
    <property type="evidence" value="ECO:0000318"/>
    <property type="project" value="GO_Central"/>
</dbReference>
<dbReference type="GO" id="GO:0043330">
    <property type="term" value="P:response to exogenous dsRNA"/>
    <property type="evidence" value="ECO:0000318"/>
    <property type="project" value="GO_Central"/>
</dbReference>
<dbReference type="GO" id="GO:0002286">
    <property type="term" value="P:T cell activation involved in immune response"/>
    <property type="evidence" value="ECO:0000318"/>
    <property type="project" value="GO_Central"/>
</dbReference>
<dbReference type="GO" id="GO:0060337">
    <property type="term" value="P:type I interferon-mediated signaling pathway"/>
    <property type="evidence" value="ECO:0000318"/>
    <property type="project" value="GO_Central"/>
</dbReference>
<dbReference type="CDD" id="cd00095">
    <property type="entry name" value="IFab"/>
    <property type="match status" value="1"/>
</dbReference>
<dbReference type="FunFam" id="1.20.1250.10:FF:000001">
    <property type="entry name" value="Interferon alpha"/>
    <property type="match status" value="1"/>
</dbReference>
<dbReference type="Gene3D" id="1.20.1250.10">
    <property type="match status" value="1"/>
</dbReference>
<dbReference type="InterPro" id="IPR009079">
    <property type="entry name" value="4_helix_cytokine-like_core"/>
</dbReference>
<dbReference type="InterPro" id="IPR000471">
    <property type="entry name" value="Interferon_alpha/beta/delta"/>
</dbReference>
<dbReference type="PANTHER" id="PTHR11691:SF71">
    <property type="entry name" value="INTERFERON ALPHA-16"/>
    <property type="match status" value="1"/>
</dbReference>
<dbReference type="PANTHER" id="PTHR11691">
    <property type="entry name" value="TYPE I INTERFERON"/>
    <property type="match status" value="1"/>
</dbReference>
<dbReference type="Pfam" id="PF00143">
    <property type="entry name" value="Interferon"/>
    <property type="match status" value="1"/>
</dbReference>
<dbReference type="PRINTS" id="PR00266">
    <property type="entry name" value="INTERFERONAB"/>
</dbReference>
<dbReference type="SMART" id="SM00076">
    <property type="entry name" value="IFabd"/>
    <property type="match status" value="1"/>
</dbReference>
<dbReference type="SUPFAM" id="SSF47266">
    <property type="entry name" value="4-helical cytokines"/>
    <property type="match status" value="1"/>
</dbReference>
<dbReference type="PROSITE" id="PS00252">
    <property type="entry name" value="INTERFERON_A_B_D"/>
    <property type="match status" value="1"/>
</dbReference>